<gene>
    <name evidence="1" type="primary">metN</name>
    <name type="ordered locus">HD_1098</name>
</gene>
<comment type="function">
    <text evidence="1">Part of the ABC transporter complex MetNIQ involved in methionine import. Responsible for energy coupling to the transport system.</text>
</comment>
<comment type="catalytic activity">
    <reaction evidence="1">
        <text>L-methionine(out) + ATP + H2O = L-methionine(in) + ADP + phosphate + H(+)</text>
        <dbReference type="Rhea" id="RHEA:29779"/>
        <dbReference type="ChEBI" id="CHEBI:15377"/>
        <dbReference type="ChEBI" id="CHEBI:15378"/>
        <dbReference type="ChEBI" id="CHEBI:30616"/>
        <dbReference type="ChEBI" id="CHEBI:43474"/>
        <dbReference type="ChEBI" id="CHEBI:57844"/>
        <dbReference type="ChEBI" id="CHEBI:456216"/>
        <dbReference type="EC" id="7.4.2.11"/>
    </reaction>
</comment>
<comment type="catalytic activity">
    <reaction evidence="1">
        <text>D-methionine(out) + ATP + H2O = D-methionine(in) + ADP + phosphate + H(+)</text>
        <dbReference type="Rhea" id="RHEA:29767"/>
        <dbReference type="ChEBI" id="CHEBI:15377"/>
        <dbReference type="ChEBI" id="CHEBI:15378"/>
        <dbReference type="ChEBI" id="CHEBI:30616"/>
        <dbReference type="ChEBI" id="CHEBI:43474"/>
        <dbReference type="ChEBI" id="CHEBI:57932"/>
        <dbReference type="ChEBI" id="CHEBI:456216"/>
        <dbReference type="EC" id="7.4.2.11"/>
    </reaction>
</comment>
<comment type="subunit">
    <text evidence="1">The complex is composed of two ATP-binding proteins (MetN), two transmembrane proteins (MetI) and a solute-binding protein (MetQ).</text>
</comment>
<comment type="subcellular location">
    <subcellularLocation>
        <location evidence="1">Cell inner membrane</location>
        <topology evidence="1">Peripheral membrane protein</topology>
    </subcellularLocation>
</comment>
<comment type="similarity">
    <text evidence="1">Belongs to the ABC transporter superfamily. Methionine importer (TC 3.A.1.24) family.</text>
</comment>
<sequence length="344" mass="37405">MIELKNIGKQFEVNGKKIIALDNVNLVVPKGTICGVIGASGAGKSTLIRCVNLLERPTVGNVIVDGQDLTTLSSQELISARRSIAMIFQHFNLLSSQTVFENVALPLRLSNTPTEHITKKVNELLELVGLTERKDVYPSNLSGGQKQRVAIARALASDPKVLLCDEATSALDPVTTQSILQLLKEINKRLGLTILLITHEMDVVKRICDRVAVIDQGKLIETGSVSEIFANPTTQLAQQFIQSTFHVELPTEYTEQFSSQPTLNSKPIIKFEFTGNSVDAPVLSMASKKFGIDFSILMSQIDYAGGVKFGFVIAEVEGDGEAITAAKCYLINNNVKVEVLGYVG</sequence>
<keyword id="KW-0029">Amino-acid transport</keyword>
<keyword id="KW-0067">ATP-binding</keyword>
<keyword id="KW-0997">Cell inner membrane</keyword>
<keyword id="KW-1003">Cell membrane</keyword>
<keyword id="KW-0472">Membrane</keyword>
<keyword id="KW-0547">Nucleotide-binding</keyword>
<keyword id="KW-1185">Reference proteome</keyword>
<keyword id="KW-1278">Translocase</keyword>
<keyword id="KW-0813">Transport</keyword>
<name>METN_HAEDU</name>
<accession>Q7VM95</accession>
<dbReference type="EC" id="7.4.2.11" evidence="1"/>
<dbReference type="EMBL" id="AE017143">
    <property type="protein sequence ID" value="AAP95964.1"/>
    <property type="molecule type" value="Genomic_DNA"/>
</dbReference>
<dbReference type="RefSeq" id="WP_010945013.1">
    <property type="nucleotide sequence ID" value="NC_002940.2"/>
</dbReference>
<dbReference type="SMR" id="Q7VM95"/>
<dbReference type="STRING" id="233412.HD_1098"/>
<dbReference type="KEGG" id="hdu:HD_1098"/>
<dbReference type="eggNOG" id="COG1135">
    <property type="taxonomic scope" value="Bacteria"/>
</dbReference>
<dbReference type="HOGENOM" id="CLU_000604_1_3_6"/>
<dbReference type="OrthoDB" id="9802264at2"/>
<dbReference type="Proteomes" id="UP000001022">
    <property type="component" value="Chromosome"/>
</dbReference>
<dbReference type="GO" id="GO:0009276">
    <property type="term" value="C:Gram-negative-bacterium-type cell wall"/>
    <property type="evidence" value="ECO:0007669"/>
    <property type="project" value="InterPro"/>
</dbReference>
<dbReference type="GO" id="GO:0005886">
    <property type="term" value="C:plasma membrane"/>
    <property type="evidence" value="ECO:0007669"/>
    <property type="project" value="UniProtKB-SubCell"/>
</dbReference>
<dbReference type="GO" id="GO:0033232">
    <property type="term" value="F:ABC-type D-methionine transporter activity"/>
    <property type="evidence" value="ECO:0007669"/>
    <property type="project" value="UniProtKB-EC"/>
</dbReference>
<dbReference type="GO" id="GO:0005524">
    <property type="term" value="F:ATP binding"/>
    <property type="evidence" value="ECO:0007669"/>
    <property type="project" value="UniProtKB-KW"/>
</dbReference>
<dbReference type="GO" id="GO:0016887">
    <property type="term" value="F:ATP hydrolysis activity"/>
    <property type="evidence" value="ECO:0007669"/>
    <property type="project" value="InterPro"/>
</dbReference>
<dbReference type="CDD" id="cd03258">
    <property type="entry name" value="ABC_MetN_methionine_transporter"/>
    <property type="match status" value="1"/>
</dbReference>
<dbReference type="FunFam" id="3.40.50.300:FF:000233">
    <property type="entry name" value="Methionine import ATP-binding protein MetN"/>
    <property type="match status" value="1"/>
</dbReference>
<dbReference type="Gene3D" id="3.30.70.260">
    <property type="match status" value="1"/>
</dbReference>
<dbReference type="Gene3D" id="3.40.50.300">
    <property type="entry name" value="P-loop containing nucleotide triphosphate hydrolases"/>
    <property type="match status" value="1"/>
</dbReference>
<dbReference type="InterPro" id="IPR003593">
    <property type="entry name" value="AAA+_ATPase"/>
</dbReference>
<dbReference type="InterPro" id="IPR012692">
    <property type="entry name" value="ABC_MetN_proteobac"/>
</dbReference>
<dbReference type="InterPro" id="IPR003439">
    <property type="entry name" value="ABC_transporter-like_ATP-bd"/>
</dbReference>
<dbReference type="InterPro" id="IPR017871">
    <property type="entry name" value="ABC_transporter-like_CS"/>
</dbReference>
<dbReference type="InterPro" id="IPR045865">
    <property type="entry name" value="ACT-like_dom_sf"/>
</dbReference>
<dbReference type="InterPro" id="IPR041701">
    <property type="entry name" value="MetN_ABC"/>
</dbReference>
<dbReference type="InterPro" id="IPR050086">
    <property type="entry name" value="MetN_ABC_transporter-like"/>
</dbReference>
<dbReference type="InterPro" id="IPR018449">
    <property type="entry name" value="NIL_domain"/>
</dbReference>
<dbReference type="InterPro" id="IPR027417">
    <property type="entry name" value="P-loop_NTPase"/>
</dbReference>
<dbReference type="NCBIfam" id="TIGR02314">
    <property type="entry name" value="ABC_MetN"/>
    <property type="match status" value="1"/>
</dbReference>
<dbReference type="PANTHER" id="PTHR43166">
    <property type="entry name" value="AMINO ACID IMPORT ATP-BINDING PROTEIN"/>
    <property type="match status" value="1"/>
</dbReference>
<dbReference type="PANTHER" id="PTHR43166:SF30">
    <property type="entry name" value="METHIONINE IMPORT ATP-BINDING PROTEIN METN"/>
    <property type="match status" value="1"/>
</dbReference>
<dbReference type="Pfam" id="PF00005">
    <property type="entry name" value="ABC_tran"/>
    <property type="match status" value="1"/>
</dbReference>
<dbReference type="Pfam" id="PF09383">
    <property type="entry name" value="NIL"/>
    <property type="match status" value="1"/>
</dbReference>
<dbReference type="SMART" id="SM00382">
    <property type="entry name" value="AAA"/>
    <property type="match status" value="1"/>
</dbReference>
<dbReference type="SMART" id="SM00930">
    <property type="entry name" value="NIL"/>
    <property type="match status" value="1"/>
</dbReference>
<dbReference type="SUPFAM" id="SSF55021">
    <property type="entry name" value="ACT-like"/>
    <property type="match status" value="1"/>
</dbReference>
<dbReference type="SUPFAM" id="SSF52540">
    <property type="entry name" value="P-loop containing nucleoside triphosphate hydrolases"/>
    <property type="match status" value="1"/>
</dbReference>
<dbReference type="PROSITE" id="PS00211">
    <property type="entry name" value="ABC_TRANSPORTER_1"/>
    <property type="match status" value="1"/>
</dbReference>
<dbReference type="PROSITE" id="PS50893">
    <property type="entry name" value="ABC_TRANSPORTER_2"/>
    <property type="match status" value="1"/>
</dbReference>
<dbReference type="PROSITE" id="PS51264">
    <property type="entry name" value="METN"/>
    <property type="match status" value="1"/>
</dbReference>
<proteinExistence type="inferred from homology"/>
<protein>
    <recommendedName>
        <fullName evidence="1">Methionine import ATP-binding protein MetN</fullName>
        <ecNumber evidence="1">7.4.2.11</ecNumber>
    </recommendedName>
</protein>
<reference key="1">
    <citation type="submission" date="2003-06" db="EMBL/GenBank/DDBJ databases">
        <title>The complete genome sequence of Haemophilus ducreyi.</title>
        <authorList>
            <person name="Munson R.S. Jr."/>
            <person name="Ray W.C."/>
            <person name="Mahairas G."/>
            <person name="Sabo P."/>
            <person name="Mungur R."/>
            <person name="Johnson L."/>
            <person name="Nguyen D."/>
            <person name="Wang J."/>
            <person name="Forst C."/>
            <person name="Hood L."/>
        </authorList>
    </citation>
    <scope>NUCLEOTIDE SEQUENCE [LARGE SCALE GENOMIC DNA]</scope>
    <source>
        <strain>35000HP / ATCC 700724</strain>
    </source>
</reference>
<evidence type="ECO:0000255" key="1">
    <source>
        <dbReference type="HAMAP-Rule" id="MF_01719"/>
    </source>
</evidence>
<feature type="chain" id="PRO_0000270306" description="Methionine import ATP-binding protein MetN">
    <location>
        <begin position="1"/>
        <end position="344"/>
    </location>
</feature>
<feature type="domain" description="ABC transporter" evidence="1">
    <location>
        <begin position="2"/>
        <end position="241"/>
    </location>
</feature>
<feature type="binding site" evidence="1">
    <location>
        <begin position="38"/>
        <end position="45"/>
    </location>
    <ligand>
        <name>ATP</name>
        <dbReference type="ChEBI" id="CHEBI:30616"/>
    </ligand>
</feature>
<organism>
    <name type="scientific">Haemophilus ducreyi (strain 35000HP / ATCC 700724)</name>
    <dbReference type="NCBI Taxonomy" id="233412"/>
    <lineage>
        <taxon>Bacteria</taxon>
        <taxon>Pseudomonadati</taxon>
        <taxon>Pseudomonadota</taxon>
        <taxon>Gammaproteobacteria</taxon>
        <taxon>Pasteurellales</taxon>
        <taxon>Pasteurellaceae</taxon>
        <taxon>Haemophilus</taxon>
    </lineage>
</organism>